<accession>Q16143</accession>
<accession>Q6IAX7</accession>
<protein>
    <recommendedName>
        <fullName>Beta-synuclein</fullName>
    </recommendedName>
</protein>
<dbReference type="EMBL" id="S69965">
    <property type="protein sequence ID" value="AAB30860.1"/>
    <property type="molecule type" value="mRNA"/>
</dbReference>
<dbReference type="EMBL" id="AF053136">
    <property type="protein sequence ID" value="AAC80286.1"/>
    <property type="molecule type" value="Genomic_DNA"/>
</dbReference>
<dbReference type="EMBL" id="AF053134">
    <property type="protein sequence ID" value="AAC80286.1"/>
    <property type="status" value="JOINED"/>
    <property type="molecule type" value="Genomic_DNA"/>
</dbReference>
<dbReference type="EMBL" id="AF053135">
    <property type="protein sequence ID" value="AAC80286.1"/>
    <property type="status" value="JOINED"/>
    <property type="molecule type" value="Genomic_DNA"/>
</dbReference>
<dbReference type="EMBL" id="BT006627">
    <property type="protein sequence ID" value="AAP35273.1"/>
    <property type="molecule type" value="mRNA"/>
</dbReference>
<dbReference type="EMBL" id="CR457027">
    <property type="protein sequence ID" value="CAG33308.1"/>
    <property type="molecule type" value="mRNA"/>
</dbReference>
<dbReference type="EMBL" id="BC002902">
    <property type="protein sequence ID" value="AAH02902.1"/>
    <property type="molecule type" value="mRNA"/>
</dbReference>
<dbReference type="CCDS" id="CCDS4406.1"/>
<dbReference type="PIR" id="S44430">
    <property type="entry name" value="S44430"/>
</dbReference>
<dbReference type="RefSeq" id="NP_001001502.1">
    <property type="nucleotide sequence ID" value="NM_001001502.3"/>
</dbReference>
<dbReference type="RefSeq" id="NP_001350069.1">
    <property type="nucleotide sequence ID" value="NM_001363140.2"/>
</dbReference>
<dbReference type="RefSeq" id="NP_003076.1">
    <property type="nucleotide sequence ID" value="NM_003085.5"/>
</dbReference>
<dbReference type="RefSeq" id="XP_006714979.1">
    <property type="nucleotide sequence ID" value="XM_006714916.2"/>
</dbReference>
<dbReference type="BMRB" id="Q16143"/>
<dbReference type="BioGRID" id="112504">
    <property type="interactions" value="22"/>
</dbReference>
<dbReference type="FunCoup" id="Q16143">
    <property type="interactions" value="142"/>
</dbReference>
<dbReference type="IntAct" id="Q16143">
    <property type="interactions" value="16"/>
</dbReference>
<dbReference type="MINT" id="Q16143"/>
<dbReference type="STRING" id="9606.ENSP00000377296"/>
<dbReference type="TCDB" id="1.C.77.1.2">
    <property type="family name" value="the synuclein (synuclein) family"/>
</dbReference>
<dbReference type="GlyCosmos" id="Q16143">
    <property type="glycosylation" value="3 sites, 1 glycan"/>
</dbReference>
<dbReference type="GlyGen" id="Q16143">
    <property type="glycosylation" value="3 sites, 1 O-linked glycan (3 sites)"/>
</dbReference>
<dbReference type="iPTMnet" id="Q16143"/>
<dbReference type="PhosphoSitePlus" id="Q16143"/>
<dbReference type="BioMuta" id="SNCB"/>
<dbReference type="DMDM" id="2501105"/>
<dbReference type="jPOST" id="Q16143"/>
<dbReference type="MassIVE" id="Q16143"/>
<dbReference type="PaxDb" id="9606-ENSP00000308057"/>
<dbReference type="PeptideAtlas" id="Q16143"/>
<dbReference type="ProteomicsDB" id="60833"/>
<dbReference type="Pumba" id="Q16143"/>
<dbReference type="Antibodypedia" id="3634">
    <property type="antibodies" value="381 antibodies from 40 providers"/>
</dbReference>
<dbReference type="DNASU" id="6620"/>
<dbReference type="Ensembl" id="ENST00000310112.7">
    <property type="protein sequence ID" value="ENSP00000308057.3"/>
    <property type="gene ID" value="ENSG00000074317.11"/>
</dbReference>
<dbReference type="Ensembl" id="ENST00000393693.7">
    <property type="protein sequence ID" value="ENSP00000377296.2"/>
    <property type="gene ID" value="ENSG00000074317.11"/>
</dbReference>
<dbReference type="Ensembl" id="ENST00000506696.1">
    <property type="protein sequence ID" value="ENSP00000422223.1"/>
    <property type="gene ID" value="ENSG00000074317.11"/>
</dbReference>
<dbReference type="Ensembl" id="ENST00000510387.5">
    <property type="protein sequence ID" value="ENSP00000424073.1"/>
    <property type="gene ID" value="ENSG00000074317.11"/>
</dbReference>
<dbReference type="GeneID" id="6620"/>
<dbReference type="KEGG" id="hsa:6620"/>
<dbReference type="MANE-Select" id="ENST00000393693.7">
    <property type="protein sequence ID" value="ENSP00000377296.2"/>
    <property type="RefSeq nucleotide sequence ID" value="NM_003085.5"/>
    <property type="RefSeq protein sequence ID" value="NP_003076.1"/>
</dbReference>
<dbReference type="UCSC" id="uc003mep.4">
    <property type="organism name" value="human"/>
</dbReference>
<dbReference type="AGR" id="HGNC:11140"/>
<dbReference type="CTD" id="6620"/>
<dbReference type="DisGeNET" id="6620"/>
<dbReference type="GeneCards" id="SNCB"/>
<dbReference type="HGNC" id="HGNC:11140">
    <property type="gene designation" value="SNCB"/>
</dbReference>
<dbReference type="HPA" id="ENSG00000074317">
    <property type="expression patterns" value="Group enriched (brain, retina)"/>
</dbReference>
<dbReference type="MalaCards" id="SNCB"/>
<dbReference type="MIM" id="602569">
    <property type="type" value="gene"/>
</dbReference>
<dbReference type="neXtProt" id="NX_Q16143"/>
<dbReference type="OpenTargets" id="ENSG00000074317"/>
<dbReference type="PharmGKB" id="PA35988"/>
<dbReference type="VEuPathDB" id="HostDB:ENSG00000074317"/>
<dbReference type="eggNOG" id="ENOG502S0N5">
    <property type="taxonomic scope" value="Eukaryota"/>
</dbReference>
<dbReference type="GeneTree" id="ENSGT00950000183175"/>
<dbReference type="HOGENOM" id="CLU_129378_1_0_1"/>
<dbReference type="InParanoid" id="Q16143"/>
<dbReference type="OMA" id="GWRERWM"/>
<dbReference type="OrthoDB" id="9944634at2759"/>
<dbReference type="PAN-GO" id="Q16143">
    <property type="GO annotations" value="8 GO annotations based on evolutionary models"/>
</dbReference>
<dbReference type="PhylomeDB" id="Q16143"/>
<dbReference type="TreeFam" id="TF332776"/>
<dbReference type="PathwayCommons" id="Q16143"/>
<dbReference type="Reactome" id="R-HSA-5660489">
    <property type="pathway name" value="MTF1 activates gene expression"/>
</dbReference>
<dbReference type="SignaLink" id="Q16143"/>
<dbReference type="SIGNOR" id="Q16143"/>
<dbReference type="BioGRID-ORCS" id="6620">
    <property type="hits" value="16 hits in 1150 CRISPR screens"/>
</dbReference>
<dbReference type="ChiTaRS" id="SNCB">
    <property type="organism name" value="human"/>
</dbReference>
<dbReference type="GeneWiki" id="Beta-synuclein"/>
<dbReference type="GenomeRNAi" id="6620"/>
<dbReference type="Pharos" id="Q16143">
    <property type="development level" value="Tbio"/>
</dbReference>
<dbReference type="PRO" id="PR:Q16143"/>
<dbReference type="Proteomes" id="UP000005640">
    <property type="component" value="Chromosome 5"/>
</dbReference>
<dbReference type="RNAct" id="Q16143">
    <property type="molecule type" value="protein"/>
</dbReference>
<dbReference type="Bgee" id="ENSG00000074317">
    <property type="expression patterns" value="Expressed in right hemisphere of cerebellum and 138 other cell types or tissues"/>
</dbReference>
<dbReference type="ExpressionAtlas" id="Q16143">
    <property type="expression patterns" value="baseline and differential"/>
</dbReference>
<dbReference type="GO" id="GO:0043679">
    <property type="term" value="C:axon terminus"/>
    <property type="evidence" value="ECO:0000318"/>
    <property type="project" value="GO_Central"/>
</dbReference>
<dbReference type="GO" id="GO:0005737">
    <property type="term" value="C:cytoplasm"/>
    <property type="evidence" value="ECO:0000318"/>
    <property type="project" value="GO_Central"/>
</dbReference>
<dbReference type="GO" id="GO:0005829">
    <property type="term" value="C:cytosol"/>
    <property type="evidence" value="ECO:0000304"/>
    <property type="project" value="Reactome"/>
</dbReference>
<dbReference type="GO" id="GO:0016234">
    <property type="term" value="C:inclusion body"/>
    <property type="evidence" value="ECO:0000314"/>
    <property type="project" value="ParkinsonsUK-UCL"/>
</dbReference>
<dbReference type="GO" id="GO:0043025">
    <property type="term" value="C:neuronal cell body"/>
    <property type="evidence" value="ECO:0000318"/>
    <property type="project" value="GO_Central"/>
</dbReference>
<dbReference type="GO" id="GO:0005509">
    <property type="term" value="F:calcium ion binding"/>
    <property type="evidence" value="ECO:0000314"/>
    <property type="project" value="UniProtKB"/>
</dbReference>
<dbReference type="GO" id="GO:1903136">
    <property type="term" value="F:cuprous ion binding"/>
    <property type="evidence" value="ECO:0000315"/>
    <property type="project" value="CAFA"/>
</dbReference>
<dbReference type="GO" id="GO:0004859">
    <property type="term" value="F:phospholipase inhibitor activity"/>
    <property type="evidence" value="ECO:0000304"/>
    <property type="project" value="ProtInc"/>
</dbReference>
<dbReference type="GO" id="GO:0046914">
    <property type="term" value="F:transition metal ion binding"/>
    <property type="evidence" value="ECO:0000315"/>
    <property type="project" value="CAFA"/>
</dbReference>
<dbReference type="GO" id="GO:0007268">
    <property type="term" value="P:chemical synaptic transmission"/>
    <property type="evidence" value="ECO:0000318"/>
    <property type="project" value="GO_Central"/>
</dbReference>
<dbReference type="GO" id="GO:0042417">
    <property type="term" value="P:dopamine metabolic process"/>
    <property type="evidence" value="ECO:0007669"/>
    <property type="project" value="Ensembl"/>
</dbReference>
<dbReference type="GO" id="GO:0043524">
    <property type="term" value="P:negative regulation of neuron apoptotic process"/>
    <property type="evidence" value="ECO:0007669"/>
    <property type="project" value="Ensembl"/>
</dbReference>
<dbReference type="GO" id="GO:0051402">
    <property type="term" value="P:neuron apoptotic process"/>
    <property type="evidence" value="ECO:0007669"/>
    <property type="project" value="Ensembl"/>
</dbReference>
<dbReference type="GO" id="GO:0050808">
    <property type="term" value="P:synapse organization"/>
    <property type="evidence" value="ECO:0000318"/>
    <property type="project" value="GO_Central"/>
</dbReference>
<dbReference type="GO" id="GO:0048488">
    <property type="term" value="P:synaptic vesicle endocytosis"/>
    <property type="evidence" value="ECO:0000318"/>
    <property type="project" value="GO_Central"/>
</dbReference>
<dbReference type="DisProt" id="DP00555"/>
<dbReference type="FunFam" id="1.10.287.700:FF:000001">
    <property type="entry name" value="Alpha-synuclein"/>
    <property type="match status" value="1"/>
</dbReference>
<dbReference type="Gene3D" id="1.10.287.700">
    <property type="entry name" value="Helix hairpin bin"/>
    <property type="match status" value="1"/>
</dbReference>
<dbReference type="InterPro" id="IPR001058">
    <property type="entry name" value="Synuclein"/>
</dbReference>
<dbReference type="InterPro" id="IPR002461">
    <property type="entry name" value="Synuclein_beta"/>
</dbReference>
<dbReference type="PANTHER" id="PTHR13820:SF4">
    <property type="entry name" value="BETA-SYNUCLEIN"/>
    <property type="match status" value="1"/>
</dbReference>
<dbReference type="PANTHER" id="PTHR13820">
    <property type="entry name" value="SYNUCLEIN"/>
    <property type="match status" value="1"/>
</dbReference>
<dbReference type="Pfam" id="PF01387">
    <property type="entry name" value="Synuclein"/>
    <property type="match status" value="1"/>
</dbReference>
<dbReference type="PRINTS" id="PR01213">
    <property type="entry name" value="BSYNUCLEIN"/>
</dbReference>
<dbReference type="PRINTS" id="PR01211">
    <property type="entry name" value="SYNUCLEIN"/>
</dbReference>
<dbReference type="SUPFAM" id="SSF118375">
    <property type="entry name" value="Synuclein"/>
    <property type="match status" value="1"/>
</dbReference>
<gene>
    <name type="primary">SNCB</name>
</gene>
<sequence length="134" mass="14288">MDVFMKGLSMAKEGVVAAAEKTKQGVTEAAEKTKEGVLYVGSKTREGVVQGVASVAEKTKEQASHLGGAVFSGAGNIAAATGLVKREEFPTDLKPEEVAQEAAEEPLIEPLMEPEGESYEDPPQEEYQEYEPEA</sequence>
<proteinExistence type="evidence at protein level"/>
<name>SYUB_HUMAN</name>
<organism>
    <name type="scientific">Homo sapiens</name>
    <name type="common">Human</name>
    <dbReference type="NCBI Taxonomy" id="9606"/>
    <lineage>
        <taxon>Eukaryota</taxon>
        <taxon>Metazoa</taxon>
        <taxon>Chordata</taxon>
        <taxon>Craniata</taxon>
        <taxon>Vertebrata</taxon>
        <taxon>Euteleostomi</taxon>
        <taxon>Mammalia</taxon>
        <taxon>Eutheria</taxon>
        <taxon>Euarchontoglires</taxon>
        <taxon>Primates</taxon>
        <taxon>Haplorrhini</taxon>
        <taxon>Catarrhini</taxon>
        <taxon>Hominidae</taxon>
        <taxon>Homo</taxon>
    </lineage>
</organism>
<reference key="1">
    <citation type="journal article" date="1994" name="FEBS Lett.">
        <title>Identification of two distinct synucleins from human brain.</title>
        <authorList>
            <person name="Jakes R."/>
            <person name="Spillantini M.G."/>
            <person name="Goedert M."/>
        </authorList>
    </citation>
    <scope>NUCLEOTIDE SEQUENCE [MRNA]</scope>
    <scope>PARTIAL PROTEIN SEQUENCE</scope>
    <source>
        <tissue>Brain</tissue>
    </source>
</reference>
<reference key="2">
    <citation type="journal article" date="1998" name="Genomics">
        <title>Genomic organization and expression of the human beta-synuclein gene (SNCB).</title>
        <authorList>
            <person name="Lavedan C."/>
            <person name="Leroy E."/>
            <person name="Torres R."/>
            <person name="Dehejia A."/>
            <person name="Dutra A."/>
            <person name="Buchholtz S."/>
            <person name="Nussbaum R.L."/>
            <person name="Polymeropoulos M.H."/>
        </authorList>
    </citation>
    <scope>NUCLEOTIDE SEQUENCE [GENOMIC DNA]</scope>
</reference>
<reference key="3">
    <citation type="submission" date="2003-05" db="EMBL/GenBank/DDBJ databases">
        <title>Cloning of human full-length CDSs in BD Creator(TM) system donor vector.</title>
        <authorList>
            <person name="Kalnine N."/>
            <person name="Chen X."/>
            <person name="Rolfs A."/>
            <person name="Halleck A."/>
            <person name="Hines L."/>
            <person name="Eisenstein S."/>
            <person name="Koundinya M."/>
            <person name="Raphael J."/>
            <person name="Moreira D."/>
            <person name="Kelley T."/>
            <person name="LaBaer J."/>
            <person name="Lin Y."/>
            <person name="Phelan M."/>
            <person name="Farmer A."/>
        </authorList>
    </citation>
    <scope>NUCLEOTIDE SEQUENCE [LARGE SCALE MRNA]</scope>
</reference>
<reference key="4">
    <citation type="submission" date="2004-06" db="EMBL/GenBank/DDBJ databases">
        <title>Cloning of human full open reading frames in Gateway(TM) system entry vector (pDONR201).</title>
        <authorList>
            <person name="Ebert L."/>
            <person name="Schick M."/>
            <person name="Neubert P."/>
            <person name="Schatten R."/>
            <person name="Henze S."/>
            <person name="Korn B."/>
        </authorList>
    </citation>
    <scope>NUCLEOTIDE SEQUENCE [LARGE SCALE MRNA]</scope>
</reference>
<reference key="5">
    <citation type="journal article" date="2004" name="Genome Res.">
        <title>The status, quality, and expansion of the NIH full-length cDNA project: the Mammalian Gene Collection (MGC).</title>
        <authorList>
            <consortium name="The MGC Project Team"/>
        </authorList>
    </citation>
    <scope>NUCLEOTIDE SEQUENCE [LARGE SCALE MRNA]</scope>
    <source>
        <tissue>Lung</tissue>
    </source>
</reference>
<reference key="6">
    <citation type="submission" date="2008-12" db="UniProtKB">
        <authorList>
            <person name="Lubec G."/>
            <person name="Chen W.-Q."/>
            <person name="Sun Y."/>
        </authorList>
    </citation>
    <scope>PROTEIN SEQUENCE OF 46-85</scope>
    <scope>IDENTIFICATION BY MASS SPECTROMETRY</scope>
    <source>
        <tissue>Fetal brain cortex</tissue>
    </source>
</reference>
<reference key="7">
    <citation type="journal article" date="2000" name="J. Biol. Chem.">
        <title>Synucleins are a novel class of substrates for G protein-coupled receptor kinases.</title>
        <authorList>
            <person name="Pronin A.N."/>
            <person name="Morris A.J."/>
            <person name="Surguchov A."/>
            <person name="Benovic J.L."/>
        </authorList>
    </citation>
    <scope>PHOSPHORYLATION AT SER-118</scope>
</reference>
<feature type="chain" id="PRO_0000184035" description="Beta-synuclein">
    <location>
        <begin position="1"/>
        <end position="134"/>
    </location>
</feature>
<feature type="repeat" description="1">
    <location>
        <begin position="20"/>
        <end position="30"/>
    </location>
</feature>
<feature type="repeat" description="2">
    <location>
        <begin position="31"/>
        <end position="41"/>
    </location>
</feature>
<feature type="repeat" description="3; approximate">
    <location>
        <begin position="42"/>
        <end position="56"/>
    </location>
</feature>
<feature type="repeat" description="4">
    <location>
        <begin position="57"/>
        <end position="67"/>
    </location>
</feature>
<feature type="region of interest" description="4 X 11 AA tandem repeats of [EGS]-K-T-K-[EQ]-[GQ]-V-X(4)">
    <location>
        <begin position="20"/>
        <end position="67"/>
    </location>
</feature>
<feature type="region of interest" description="Disordered" evidence="1">
    <location>
        <begin position="89"/>
        <end position="134"/>
    </location>
</feature>
<feature type="compositionally biased region" description="Acidic residues" evidence="1">
    <location>
        <begin position="98"/>
        <end position="134"/>
    </location>
</feature>
<feature type="modified residue" description="Phosphoserine; by BARK1, CK2 and GRK5" evidence="2">
    <location>
        <position position="118"/>
    </location>
</feature>
<keyword id="KW-0963">Cytoplasm</keyword>
<keyword id="KW-0903">Direct protein sequencing</keyword>
<keyword id="KW-0597">Phosphoprotein</keyword>
<keyword id="KW-1267">Proteomics identification</keyword>
<keyword id="KW-1185">Reference proteome</keyword>
<keyword id="KW-0677">Repeat</keyword>
<comment type="function">
    <text>Non-amyloid component of senile plaques found in Alzheimer disease. Could act as a regulator of SNCA aggregation process. Protects neurons from staurosporine and 6-hydroxy dopamine (6OHDA)-stimulated caspase activation in a p53/TP53-dependent manner. Contributes to restore the SNCA anti-apoptotic function abolished by 6OHDA. Not found in the Lewy bodies associated with Parkinson disease.</text>
</comment>
<comment type="interaction">
    <interactant intactId="EBI-727106">
        <id>Q16143</id>
    </interactant>
    <interactant intactId="EBI-77613">
        <id>P05067</id>
        <label>APP</label>
    </interactant>
    <organismsDiffer>false</organismsDiffer>
    <experiments>3</experiments>
</comment>
<comment type="interaction">
    <interactant intactId="EBI-727106">
        <id>Q16143</id>
    </interactant>
    <interactant intactId="EBI-350590">
        <id>Q9UNS2</id>
        <label>COPS3</label>
    </interactant>
    <organismsDiffer>false</organismsDiffer>
    <experiments>3</experiments>
</comment>
<comment type="interaction">
    <interactant intactId="EBI-727106">
        <id>Q16143</id>
    </interactant>
    <interactant intactId="EBI-10269566">
        <id>Q8NDC4</id>
        <label>MORN4</label>
    </interactant>
    <organismsDiffer>false</organismsDiffer>
    <experiments>6</experiments>
</comment>
<comment type="interaction">
    <interactant intactId="EBI-727106">
        <id>Q16143</id>
    </interactant>
    <interactant intactId="EBI-629434">
        <id>O75925</id>
        <label>PIAS1</label>
    </interactant>
    <organismsDiffer>false</organismsDiffer>
    <experiments>3</experiments>
</comment>
<comment type="interaction">
    <interactant intactId="EBI-727106">
        <id>Q16143</id>
    </interactant>
    <interactant intactId="EBI-752324">
        <id>Q8N488</id>
        <label>RYBP</label>
    </interactant>
    <organismsDiffer>false</organismsDiffer>
    <experiments>3</experiments>
</comment>
<comment type="interaction">
    <interactant intactId="EBI-727106">
        <id>Q16143</id>
    </interactant>
    <interactant intactId="EBI-358545">
        <id>Q9GZS3</id>
        <label>SKIC8</label>
    </interactant>
    <organismsDiffer>false</organismsDiffer>
    <experiments>3</experiments>
</comment>
<comment type="interaction">
    <interactant intactId="EBI-727106">
        <id>Q16143</id>
    </interactant>
    <interactant intactId="EBI-985879">
        <id>P37840</id>
        <label>SNCA</label>
    </interactant>
    <organismsDiffer>false</organismsDiffer>
    <experiments>3</experiments>
</comment>
<comment type="subcellular location">
    <subcellularLocation>
        <location>Cytoplasm</location>
    </subcellularLocation>
</comment>
<comment type="tissue specificity">
    <text>Expressed predominantly in brain; concentrated in presynaptic nerve terminals.</text>
</comment>
<comment type="PTM">
    <text evidence="2">Phosphorylated. Phosphorylation by G-protein coupled receptor kinases (GRK) is more efficient than phosphorylation by CK1, CK2 and CaM-kinase II.</text>
</comment>
<comment type="similarity">
    <text evidence="3">Belongs to the synuclein family.</text>
</comment>
<evidence type="ECO:0000256" key="1">
    <source>
        <dbReference type="SAM" id="MobiDB-lite"/>
    </source>
</evidence>
<evidence type="ECO:0000269" key="2">
    <source>
    </source>
</evidence>
<evidence type="ECO:0000305" key="3"/>